<comment type="subcellular location">
    <subcellularLocation>
        <location evidence="3">Membrane</location>
        <topology evidence="3">Multi-pass membrane protein</topology>
    </subcellularLocation>
</comment>
<comment type="similarity">
    <text evidence="3">Belongs to the major facilitator superfamily. Sugar transporter (TC 2.A.1.1) family.</text>
</comment>
<keyword id="KW-0472">Membrane</keyword>
<keyword id="KW-1185">Reference proteome</keyword>
<keyword id="KW-0762">Sugar transport</keyword>
<keyword id="KW-0812">Transmembrane</keyword>
<keyword id="KW-1133">Transmembrane helix</keyword>
<keyword id="KW-0813">Transport</keyword>
<reference key="1">
    <citation type="journal article" date="2002" name="Nature">
        <title>The genome sequence of Schizosaccharomyces pombe.</title>
        <authorList>
            <person name="Wood V."/>
            <person name="Gwilliam R."/>
            <person name="Rajandream M.A."/>
            <person name="Lyne M.H."/>
            <person name="Lyne R."/>
            <person name="Stewart A."/>
            <person name="Sgouros J.G."/>
            <person name="Peat N."/>
            <person name="Hayles J."/>
            <person name="Baker S.G."/>
            <person name="Basham D."/>
            <person name="Bowman S."/>
            <person name="Brooks K."/>
            <person name="Brown D."/>
            <person name="Brown S."/>
            <person name="Chillingworth T."/>
            <person name="Churcher C.M."/>
            <person name="Collins M."/>
            <person name="Connor R."/>
            <person name="Cronin A."/>
            <person name="Davis P."/>
            <person name="Feltwell T."/>
            <person name="Fraser A."/>
            <person name="Gentles S."/>
            <person name="Goble A."/>
            <person name="Hamlin N."/>
            <person name="Harris D.E."/>
            <person name="Hidalgo J."/>
            <person name="Hodgson G."/>
            <person name="Holroyd S."/>
            <person name="Hornsby T."/>
            <person name="Howarth S."/>
            <person name="Huckle E.J."/>
            <person name="Hunt S."/>
            <person name="Jagels K."/>
            <person name="James K.D."/>
            <person name="Jones L."/>
            <person name="Jones M."/>
            <person name="Leather S."/>
            <person name="McDonald S."/>
            <person name="McLean J."/>
            <person name="Mooney P."/>
            <person name="Moule S."/>
            <person name="Mungall K.L."/>
            <person name="Murphy L.D."/>
            <person name="Niblett D."/>
            <person name="Odell C."/>
            <person name="Oliver K."/>
            <person name="O'Neil S."/>
            <person name="Pearson D."/>
            <person name="Quail M.A."/>
            <person name="Rabbinowitsch E."/>
            <person name="Rutherford K.M."/>
            <person name="Rutter S."/>
            <person name="Saunders D."/>
            <person name="Seeger K."/>
            <person name="Sharp S."/>
            <person name="Skelton J."/>
            <person name="Simmonds M.N."/>
            <person name="Squares R."/>
            <person name="Squares S."/>
            <person name="Stevens K."/>
            <person name="Taylor K."/>
            <person name="Taylor R.G."/>
            <person name="Tivey A."/>
            <person name="Walsh S.V."/>
            <person name="Warren T."/>
            <person name="Whitehead S."/>
            <person name="Woodward J.R."/>
            <person name="Volckaert G."/>
            <person name="Aert R."/>
            <person name="Robben J."/>
            <person name="Grymonprez B."/>
            <person name="Weltjens I."/>
            <person name="Vanstreels E."/>
            <person name="Rieger M."/>
            <person name="Schaefer M."/>
            <person name="Mueller-Auer S."/>
            <person name="Gabel C."/>
            <person name="Fuchs M."/>
            <person name="Duesterhoeft A."/>
            <person name="Fritzc C."/>
            <person name="Holzer E."/>
            <person name="Moestl D."/>
            <person name="Hilbert H."/>
            <person name="Borzym K."/>
            <person name="Langer I."/>
            <person name="Beck A."/>
            <person name="Lehrach H."/>
            <person name="Reinhardt R."/>
            <person name="Pohl T.M."/>
            <person name="Eger P."/>
            <person name="Zimmermann W."/>
            <person name="Wedler H."/>
            <person name="Wambutt R."/>
            <person name="Purnelle B."/>
            <person name="Goffeau A."/>
            <person name="Cadieu E."/>
            <person name="Dreano S."/>
            <person name="Gloux S."/>
            <person name="Lelaure V."/>
            <person name="Mottier S."/>
            <person name="Galibert F."/>
            <person name="Aves S.J."/>
            <person name="Xiang Z."/>
            <person name="Hunt C."/>
            <person name="Moore K."/>
            <person name="Hurst S.M."/>
            <person name="Lucas M."/>
            <person name="Rochet M."/>
            <person name="Gaillardin C."/>
            <person name="Tallada V.A."/>
            <person name="Garzon A."/>
            <person name="Thode G."/>
            <person name="Daga R.R."/>
            <person name="Cruzado L."/>
            <person name="Jimenez J."/>
            <person name="Sanchez M."/>
            <person name="del Rey F."/>
            <person name="Benito J."/>
            <person name="Dominguez A."/>
            <person name="Revuelta J.L."/>
            <person name="Moreno S."/>
            <person name="Armstrong J."/>
            <person name="Forsburg S.L."/>
            <person name="Cerutti L."/>
            <person name="Lowe T."/>
            <person name="McCombie W.R."/>
            <person name="Paulsen I."/>
            <person name="Potashkin J."/>
            <person name="Shpakovski G.V."/>
            <person name="Ussery D."/>
            <person name="Barrell B.G."/>
            <person name="Nurse P."/>
        </authorList>
    </citation>
    <scope>NUCLEOTIDE SEQUENCE [LARGE SCALE GENOMIC DNA]</scope>
    <source>
        <strain>972 / ATCC 24843</strain>
    </source>
</reference>
<protein>
    <recommendedName>
        <fullName>Probable high-affinity hexose transporter ght7</fullName>
        <shortName>Hexose transporter 7</shortName>
    </recommendedName>
</protein>
<evidence type="ECO:0000255" key="1"/>
<evidence type="ECO:0000256" key="2">
    <source>
        <dbReference type="SAM" id="MobiDB-lite"/>
    </source>
</evidence>
<evidence type="ECO:0000305" key="3"/>
<gene>
    <name type="primary">ght7</name>
    <name type="ORF">SPBC1348.14c</name>
    <name type="ORF">SPBPB8B6.01c</name>
</gene>
<dbReference type="EMBL" id="CU329671">
    <property type="protein sequence ID" value="CAD27907.1"/>
    <property type="molecule type" value="Genomic_DNA"/>
</dbReference>
<dbReference type="RefSeq" id="NP_001018762.2">
    <property type="nucleotide sequence ID" value="NM_001020937.3"/>
</dbReference>
<dbReference type="SMR" id="Q8TFG1"/>
<dbReference type="BioGRID" id="278230">
    <property type="interactions" value="1"/>
</dbReference>
<dbReference type="FunCoup" id="Q8TFG1">
    <property type="interactions" value="324"/>
</dbReference>
<dbReference type="STRING" id="284812.Q8TFG1"/>
<dbReference type="PaxDb" id="4896-SPBC1348.14c.1"/>
<dbReference type="EnsemblFungi" id="SPBC1348.14c.1">
    <property type="protein sequence ID" value="SPBC1348.14c.1:pep"/>
    <property type="gene ID" value="SPBC1348.14c"/>
</dbReference>
<dbReference type="GeneID" id="2541736"/>
<dbReference type="KEGG" id="spo:2541736"/>
<dbReference type="PomBase" id="SPBC1348.14c">
    <property type="gene designation" value="ght7"/>
</dbReference>
<dbReference type="VEuPathDB" id="FungiDB:SPBC1348.14c"/>
<dbReference type="eggNOG" id="KOG0254">
    <property type="taxonomic scope" value="Eukaryota"/>
</dbReference>
<dbReference type="HOGENOM" id="CLU_001265_30_1_1"/>
<dbReference type="InParanoid" id="Q8TFG1"/>
<dbReference type="OMA" id="EMFQAPR"/>
<dbReference type="PhylomeDB" id="Q8TFG1"/>
<dbReference type="PRO" id="PR:Q8TFG1"/>
<dbReference type="Proteomes" id="UP000002485">
    <property type="component" value="Chromosome II"/>
</dbReference>
<dbReference type="GO" id="GO:0005737">
    <property type="term" value="C:cytoplasm"/>
    <property type="evidence" value="ECO:0007005"/>
    <property type="project" value="PomBase"/>
</dbReference>
<dbReference type="GO" id="GO:0005886">
    <property type="term" value="C:plasma membrane"/>
    <property type="evidence" value="ECO:0000318"/>
    <property type="project" value="GO_Central"/>
</dbReference>
<dbReference type="GO" id="GO:0005351">
    <property type="term" value="F:carbohydrate:proton symporter activity"/>
    <property type="evidence" value="ECO:0000318"/>
    <property type="project" value="GO_Central"/>
</dbReference>
<dbReference type="GO" id="GO:0015149">
    <property type="term" value="F:hexose transmembrane transporter activity"/>
    <property type="evidence" value="ECO:0000303"/>
    <property type="project" value="PomBase"/>
</dbReference>
<dbReference type="GO" id="GO:0008643">
    <property type="term" value="P:carbohydrate transport"/>
    <property type="evidence" value="ECO:0000318"/>
    <property type="project" value="GO_Central"/>
</dbReference>
<dbReference type="GO" id="GO:0008645">
    <property type="term" value="P:hexose transmembrane transport"/>
    <property type="evidence" value="ECO:0000303"/>
    <property type="project" value="PomBase"/>
</dbReference>
<dbReference type="CDD" id="cd17356">
    <property type="entry name" value="MFS_HXT"/>
    <property type="match status" value="1"/>
</dbReference>
<dbReference type="FunFam" id="1.20.1250.20:FF:000044">
    <property type="entry name" value="Hexose transporter Hxt3p"/>
    <property type="match status" value="1"/>
</dbReference>
<dbReference type="Gene3D" id="1.20.1250.20">
    <property type="entry name" value="MFS general substrate transporter like domains"/>
    <property type="match status" value="1"/>
</dbReference>
<dbReference type="InterPro" id="IPR020846">
    <property type="entry name" value="MFS_dom"/>
</dbReference>
<dbReference type="InterPro" id="IPR005828">
    <property type="entry name" value="MFS_sugar_transport-like"/>
</dbReference>
<dbReference type="InterPro" id="IPR050360">
    <property type="entry name" value="MFS_Sugar_Transporters"/>
</dbReference>
<dbReference type="InterPro" id="IPR036259">
    <property type="entry name" value="MFS_trans_sf"/>
</dbReference>
<dbReference type="InterPro" id="IPR003663">
    <property type="entry name" value="Sugar/inositol_transpt"/>
</dbReference>
<dbReference type="InterPro" id="IPR005829">
    <property type="entry name" value="Sugar_transporter_CS"/>
</dbReference>
<dbReference type="NCBIfam" id="TIGR00879">
    <property type="entry name" value="SP"/>
    <property type="match status" value="1"/>
</dbReference>
<dbReference type="PANTHER" id="PTHR48022:SF86">
    <property type="entry name" value="HIGH-AFFINITY HEXOSE TRANSPORTER GHT7-RELATED"/>
    <property type="match status" value="1"/>
</dbReference>
<dbReference type="PANTHER" id="PTHR48022">
    <property type="entry name" value="PLASTIDIC GLUCOSE TRANSPORTER 4"/>
    <property type="match status" value="1"/>
</dbReference>
<dbReference type="Pfam" id="PF00083">
    <property type="entry name" value="Sugar_tr"/>
    <property type="match status" value="1"/>
</dbReference>
<dbReference type="PRINTS" id="PR00171">
    <property type="entry name" value="SUGRTRNSPORT"/>
</dbReference>
<dbReference type="SUPFAM" id="SSF103473">
    <property type="entry name" value="MFS general substrate transporter"/>
    <property type="match status" value="1"/>
</dbReference>
<dbReference type="PROSITE" id="PS50850">
    <property type="entry name" value="MFS"/>
    <property type="match status" value="1"/>
</dbReference>
<dbReference type="PROSITE" id="PS00216">
    <property type="entry name" value="SUGAR_TRANSPORT_1"/>
    <property type="match status" value="1"/>
</dbReference>
<organism>
    <name type="scientific">Schizosaccharomyces pombe (strain 972 / ATCC 24843)</name>
    <name type="common">Fission yeast</name>
    <dbReference type="NCBI Taxonomy" id="284812"/>
    <lineage>
        <taxon>Eukaryota</taxon>
        <taxon>Fungi</taxon>
        <taxon>Dikarya</taxon>
        <taxon>Ascomycota</taxon>
        <taxon>Taphrinomycotina</taxon>
        <taxon>Schizosaccharomycetes</taxon>
        <taxon>Schizosaccharomycetales</taxon>
        <taxon>Schizosaccharomycetaceae</taxon>
        <taxon>Schizosaccharomyces</taxon>
    </lineage>
</organism>
<name>GHT7_SCHPO</name>
<accession>Q8TFG1</accession>
<accession>Q9P3V2</accession>
<feature type="chain" id="PRO_0000050415" description="Probable high-affinity hexose transporter ght7">
    <location>
        <begin position="1"/>
        <end position="518"/>
    </location>
</feature>
<feature type="topological domain" description="Cytoplasmic" evidence="1">
    <location>
        <begin position="1"/>
        <end position="27"/>
    </location>
</feature>
<feature type="transmembrane region" description="Helical" evidence="1">
    <location>
        <begin position="28"/>
        <end position="48"/>
    </location>
</feature>
<feature type="topological domain" description="Extracellular" evidence="1">
    <location>
        <begin position="49"/>
        <end position="54"/>
    </location>
</feature>
<feature type="transmembrane region" description="Helical" evidence="1">
    <location>
        <begin position="55"/>
        <end position="75"/>
    </location>
</feature>
<feature type="topological domain" description="Cytoplasmic" evidence="1">
    <location>
        <begin position="76"/>
        <end position="77"/>
    </location>
</feature>
<feature type="transmembrane region" description="Helical" evidence="1">
    <location>
        <begin position="78"/>
        <end position="98"/>
    </location>
</feature>
<feature type="topological domain" description="Extracellular" evidence="1">
    <location>
        <begin position="99"/>
        <end position="112"/>
    </location>
</feature>
<feature type="transmembrane region" description="Helical" evidence="1">
    <location>
        <begin position="113"/>
        <end position="133"/>
    </location>
</feature>
<feature type="topological domain" description="Cytoplasmic" evidence="1">
    <location>
        <begin position="134"/>
        <end position="149"/>
    </location>
</feature>
<feature type="transmembrane region" description="Helical" evidence="1">
    <location>
        <begin position="150"/>
        <end position="170"/>
    </location>
</feature>
<feature type="topological domain" description="Extracellular" evidence="1">
    <location>
        <begin position="171"/>
        <end position="236"/>
    </location>
</feature>
<feature type="transmembrane region" description="Helical" evidence="1">
    <location>
        <begin position="237"/>
        <end position="257"/>
    </location>
</feature>
<feature type="topological domain" description="Cytoplasmic" evidence="1">
    <location>
        <begin position="258"/>
        <end position="271"/>
    </location>
</feature>
<feature type="transmembrane region" description="Helical" evidence="1">
    <location>
        <begin position="272"/>
        <end position="292"/>
    </location>
</feature>
<feature type="topological domain" description="Extracellular" evidence="1">
    <location>
        <begin position="293"/>
        <end position="298"/>
    </location>
</feature>
<feature type="transmembrane region" description="Helical" evidence="1">
    <location>
        <begin position="299"/>
        <end position="319"/>
    </location>
</feature>
<feature type="topological domain" description="Cytoplasmic" evidence="1">
    <location>
        <begin position="320"/>
        <end position="333"/>
    </location>
</feature>
<feature type="transmembrane region" description="Helical" evidence="1">
    <location>
        <begin position="334"/>
        <end position="354"/>
    </location>
</feature>
<feature type="topological domain" description="Extracellular" evidence="1">
    <location>
        <begin position="355"/>
        <end position="374"/>
    </location>
</feature>
<feature type="transmembrane region" description="Helical" evidence="1">
    <location>
        <begin position="375"/>
        <end position="395"/>
    </location>
</feature>
<feature type="topological domain" description="Cytoplasmic" evidence="1">
    <location>
        <begin position="396"/>
        <end position="402"/>
    </location>
</feature>
<feature type="transmembrane region" description="Helical" evidence="1">
    <location>
        <begin position="403"/>
        <end position="423"/>
    </location>
</feature>
<feature type="topological domain" description="Extracellular" evidence="1">
    <location>
        <begin position="424"/>
        <end position="518"/>
    </location>
</feature>
<feature type="region of interest" description="Disordered" evidence="2">
    <location>
        <begin position="477"/>
        <end position="518"/>
    </location>
</feature>
<feature type="compositionally biased region" description="Polar residues" evidence="2">
    <location>
        <begin position="477"/>
        <end position="506"/>
    </location>
</feature>
<sequence length="518" mass="57925">MRDFQSRFADRYNQITNSYSYSSSRQGLITGMVNVGSFFGCLLSSPVADKIGKRLSIIVWTTVYLIGIIIQVTTVPSWVQILVAKIWTGLSIGALSVITPGYQSEVAPAIMRGAIVTTYQLFITLGIFIAACINMGTHKYSHGTTAQWRISIGINLLWGIITLVGIIFLPESPRYLIAIGKDDEALKIMCYNNDLPLEHEIIQTEYHTIKSDCDAELAGGPARWPEIFNANIRYRTFLGMAVMMFQQLTGANYYFYYGTQVFRGTGMDSPYLAALIPDAVNCGCTFGAIFVLEFFGRRSPLIVGGIWQYICFFIYAAVGDRALYHKNGTSNHRAGAVMIVFSCLFIFSFSQTWAPAAYVIVGESYPVRYRSKCAAVATSANWFWNFLISFFTPFITNSIGFKYGYIFASCNLTGAAIIFLFVHETKGRTLEEINTMYASNLKPWMPHPEGYREFGREQNNATLKSHIGLNGETTELIENTDNQGDSGSFQTSTPDDSRPEQNQASATYIRPDKREPRL</sequence>
<proteinExistence type="inferred from homology"/>